<keyword id="KW-0963">Cytoplasm</keyword>
<keyword id="KW-1185">Reference proteome</keyword>
<keyword id="KW-0687">Ribonucleoprotein</keyword>
<keyword id="KW-0689">Ribosomal protein</keyword>
<proteinExistence type="inferred from homology"/>
<dbReference type="EMBL" id="GG704911">
    <property type="protein sequence ID" value="EAS36953.3"/>
    <property type="molecule type" value="Genomic_DNA"/>
</dbReference>
<dbReference type="RefSeq" id="XP_001248536.1">
    <property type="nucleotide sequence ID" value="XM_001248535.2"/>
</dbReference>
<dbReference type="SMR" id="Q1E556"/>
<dbReference type="FunCoup" id="Q1E556">
    <property type="interactions" value="1172"/>
</dbReference>
<dbReference type="STRING" id="246410.Q1E556"/>
<dbReference type="GeneID" id="4566750"/>
<dbReference type="KEGG" id="cim:CIMG_02307"/>
<dbReference type="VEuPathDB" id="FungiDB:CIMG_02307"/>
<dbReference type="InParanoid" id="Q1E556"/>
<dbReference type="OMA" id="EVFEIDM"/>
<dbReference type="OrthoDB" id="277199at2759"/>
<dbReference type="Proteomes" id="UP000001261">
    <property type="component" value="Unassembled WGS sequence"/>
</dbReference>
<dbReference type="GO" id="GO:0005737">
    <property type="term" value="C:cytoplasm"/>
    <property type="evidence" value="ECO:0007669"/>
    <property type="project" value="UniProtKB-SubCell"/>
</dbReference>
<dbReference type="GO" id="GO:1990904">
    <property type="term" value="C:ribonucleoprotein complex"/>
    <property type="evidence" value="ECO:0007669"/>
    <property type="project" value="UniProtKB-KW"/>
</dbReference>
<dbReference type="GO" id="GO:0005840">
    <property type="term" value="C:ribosome"/>
    <property type="evidence" value="ECO:0007669"/>
    <property type="project" value="UniProtKB-KW"/>
</dbReference>
<dbReference type="GO" id="GO:0003729">
    <property type="term" value="F:mRNA binding"/>
    <property type="evidence" value="ECO:0007669"/>
    <property type="project" value="TreeGrafter"/>
</dbReference>
<dbReference type="GO" id="GO:0003743">
    <property type="term" value="F:translation initiation factor activity"/>
    <property type="evidence" value="ECO:0007669"/>
    <property type="project" value="InterPro"/>
</dbReference>
<dbReference type="GO" id="GO:0001731">
    <property type="term" value="P:formation of translation preinitiation complex"/>
    <property type="evidence" value="ECO:0007669"/>
    <property type="project" value="TreeGrafter"/>
</dbReference>
<dbReference type="GO" id="GO:0002188">
    <property type="term" value="P:translation reinitiation"/>
    <property type="evidence" value="ECO:0007669"/>
    <property type="project" value="TreeGrafter"/>
</dbReference>
<dbReference type="CDD" id="cd11607">
    <property type="entry name" value="DENR_C"/>
    <property type="match status" value="1"/>
</dbReference>
<dbReference type="Gene3D" id="3.30.780.10">
    <property type="entry name" value="SUI1-like domain"/>
    <property type="match status" value="1"/>
</dbReference>
<dbReference type="InterPro" id="IPR050318">
    <property type="entry name" value="DENR/SUI1_TIF"/>
</dbReference>
<dbReference type="InterPro" id="IPR046447">
    <property type="entry name" value="DENR_C"/>
</dbReference>
<dbReference type="InterPro" id="IPR005873">
    <property type="entry name" value="DENR_eukaryotes"/>
</dbReference>
<dbReference type="InterPro" id="IPR048517">
    <property type="entry name" value="DENR_N"/>
</dbReference>
<dbReference type="InterPro" id="IPR001950">
    <property type="entry name" value="SUI1"/>
</dbReference>
<dbReference type="InterPro" id="IPR036877">
    <property type="entry name" value="SUI1_dom_sf"/>
</dbReference>
<dbReference type="NCBIfam" id="TIGR01159">
    <property type="entry name" value="DRP1"/>
    <property type="match status" value="1"/>
</dbReference>
<dbReference type="PANTHER" id="PTHR12789:SF0">
    <property type="entry name" value="DENSITY-REGULATED PROTEIN"/>
    <property type="match status" value="1"/>
</dbReference>
<dbReference type="PANTHER" id="PTHR12789">
    <property type="entry name" value="DENSITY-REGULATED PROTEIN HOMOLOG"/>
    <property type="match status" value="1"/>
</dbReference>
<dbReference type="Pfam" id="PF21023">
    <property type="entry name" value="DENR_N"/>
    <property type="match status" value="1"/>
</dbReference>
<dbReference type="Pfam" id="PF01253">
    <property type="entry name" value="SUI1"/>
    <property type="match status" value="1"/>
</dbReference>
<dbReference type="SUPFAM" id="SSF55159">
    <property type="entry name" value="eIF1-like"/>
    <property type="match status" value="1"/>
</dbReference>
<dbReference type="PROSITE" id="PS50296">
    <property type="entry name" value="SUI1"/>
    <property type="match status" value="1"/>
</dbReference>
<evidence type="ECO:0000250" key="1"/>
<evidence type="ECO:0000255" key="2">
    <source>
        <dbReference type="PROSITE-ProRule" id="PRU00200"/>
    </source>
</evidence>
<evidence type="ECO:0000305" key="3"/>
<organism>
    <name type="scientific">Coccidioides immitis (strain RS)</name>
    <name type="common">Valley fever fungus</name>
    <dbReference type="NCBI Taxonomy" id="246410"/>
    <lineage>
        <taxon>Eukaryota</taxon>
        <taxon>Fungi</taxon>
        <taxon>Dikarya</taxon>
        <taxon>Ascomycota</taxon>
        <taxon>Pezizomycotina</taxon>
        <taxon>Eurotiomycetes</taxon>
        <taxon>Eurotiomycetidae</taxon>
        <taxon>Onygenales</taxon>
        <taxon>Onygenaceae</taxon>
        <taxon>Coccidioides</taxon>
    </lineage>
</organism>
<reference key="1">
    <citation type="journal article" date="2009" name="Genome Res.">
        <title>Comparative genomic analyses of the human fungal pathogens Coccidioides and their relatives.</title>
        <authorList>
            <person name="Sharpton T.J."/>
            <person name="Stajich J.E."/>
            <person name="Rounsley S.D."/>
            <person name="Gardner M.J."/>
            <person name="Wortman J.R."/>
            <person name="Jordar V.S."/>
            <person name="Maiti R."/>
            <person name="Kodira C.D."/>
            <person name="Neafsey D.E."/>
            <person name="Zeng Q."/>
            <person name="Hung C.-Y."/>
            <person name="McMahan C."/>
            <person name="Muszewska A."/>
            <person name="Grynberg M."/>
            <person name="Mandel M.A."/>
            <person name="Kellner E.M."/>
            <person name="Barker B.M."/>
            <person name="Galgiani J.N."/>
            <person name="Orbach M.J."/>
            <person name="Kirkland T.N."/>
            <person name="Cole G.T."/>
            <person name="Henn M.R."/>
            <person name="Birren B.W."/>
            <person name="Taylor J.W."/>
        </authorList>
    </citation>
    <scope>NUCLEOTIDE SEQUENCE [LARGE SCALE GENOMIC DNA]</scope>
    <source>
        <strain>RS</strain>
    </source>
</reference>
<reference key="2">
    <citation type="journal article" date="2010" name="Genome Res.">
        <title>Population genomic sequencing of Coccidioides fungi reveals recent hybridization and transposon control.</title>
        <authorList>
            <person name="Neafsey D.E."/>
            <person name="Barker B.M."/>
            <person name="Sharpton T.J."/>
            <person name="Stajich J.E."/>
            <person name="Park D.J."/>
            <person name="Whiston E."/>
            <person name="Hung C.-Y."/>
            <person name="McMahan C."/>
            <person name="White J."/>
            <person name="Sykes S."/>
            <person name="Heiman D."/>
            <person name="Young S."/>
            <person name="Zeng Q."/>
            <person name="Abouelleil A."/>
            <person name="Aftuck L."/>
            <person name="Bessette D."/>
            <person name="Brown A."/>
            <person name="FitzGerald M."/>
            <person name="Lui A."/>
            <person name="Macdonald J.P."/>
            <person name="Priest M."/>
            <person name="Orbach M.J."/>
            <person name="Galgiani J.N."/>
            <person name="Kirkland T.N."/>
            <person name="Cole G.T."/>
            <person name="Birren B.W."/>
            <person name="Henn M.R."/>
            <person name="Taylor J.W."/>
            <person name="Rounsley S.D."/>
        </authorList>
    </citation>
    <scope>GENOME REANNOTATION</scope>
    <source>
        <strain>RS</strain>
    </source>
</reference>
<name>DENR_COCIM</name>
<protein>
    <recommendedName>
        <fullName>Translation machinery-associated protein 22</fullName>
    </recommendedName>
</protein>
<sequence length="200" mass="22018">MAEAADTEVQTTSLEPQARHIVYCGVCSLPPEYCEFGGTAKKCEEWLHENNPSMHQKLYSEETIAANLSTLSIQARERAAKDAAKKEAKAALVETRNQERKAAAKVQIKRVERNKRKHVTVIAGLEAHGLDNKKVAKELGKKFATGSSVTKNPAGGEEITVQGDVCEDVLEWLVEVHGKEVPEDNLEIVEDKKKKKAAAE</sequence>
<gene>
    <name type="primary">TMA22</name>
    <name type="ORF">CIMG_02307</name>
</gene>
<comment type="subunit">
    <text evidence="1">Interacts with the 40S ribosomal subunit.</text>
</comment>
<comment type="subcellular location">
    <subcellularLocation>
        <location evidence="1">Cytoplasm</location>
    </subcellularLocation>
</comment>
<comment type="domain">
    <text>The SUI1 domain may be involved in RNA binding.</text>
</comment>
<comment type="similarity">
    <text evidence="3">Belongs to the DENR family.</text>
</comment>
<feature type="chain" id="PRO_0000320440" description="Translation machinery-associated protein 22">
    <location>
        <begin position="1"/>
        <end position="200"/>
    </location>
</feature>
<feature type="domain" description="SUI1" evidence="2">
    <location>
        <begin position="106"/>
        <end position="177"/>
    </location>
</feature>
<accession>Q1E556</accession>
<accession>J3KLF8</accession>